<sequence>MTIAPEGRRMLRIEARNAETPIERKPSWIRTKARTGPDYTELKGLVKSGGLHTVCEEAGCPNIYECWEDREATFLIGGSECTRRCDFCQIDTGKPSPLDRDEPRRVAESIATMGLRYATITGVARDDLDDGGAWLYAETIRATHAANPGTGVEILVPDFNGKPELLQQVFDAQPEVFAHNVETVPRIFKSIRPAFRYERSLDVITQGRDAGLVTKSNLILGMGETDEEVLEALADLRGAGCDIITITQYLRPTPRHHPVERWVKPEKFVEFSAEAERLGFAGVMAGPLVRSSYRAGRLWAQAMKRRGVAIPAQLAHLDKESPAAQEASSLLAR</sequence>
<dbReference type="EC" id="2.8.1.8" evidence="1"/>
<dbReference type="EMBL" id="CP000750">
    <property type="protein sequence ID" value="ABS04752.1"/>
    <property type="molecule type" value="Genomic_DNA"/>
</dbReference>
<dbReference type="RefSeq" id="WP_012086989.1">
    <property type="nucleotide sequence ID" value="NC_009664.2"/>
</dbReference>
<dbReference type="SMR" id="A6WD63"/>
<dbReference type="STRING" id="266940.Krad_3288"/>
<dbReference type="KEGG" id="kra:Krad_3288"/>
<dbReference type="eggNOG" id="COG0320">
    <property type="taxonomic scope" value="Bacteria"/>
</dbReference>
<dbReference type="HOGENOM" id="CLU_033144_2_1_11"/>
<dbReference type="OrthoDB" id="9787898at2"/>
<dbReference type="UniPathway" id="UPA00538">
    <property type="reaction ID" value="UER00593"/>
</dbReference>
<dbReference type="Proteomes" id="UP000001116">
    <property type="component" value="Chromosome"/>
</dbReference>
<dbReference type="GO" id="GO:0005737">
    <property type="term" value="C:cytoplasm"/>
    <property type="evidence" value="ECO:0007669"/>
    <property type="project" value="UniProtKB-SubCell"/>
</dbReference>
<dbReference type="GO" id="GO:0051539">
    <property type="term" value="F:4 iron, 4 sulfur cluster binding"/>
    <property type="evidence" value="ECO:0007669"/>
    <property type="project" value="UniProtKB-UniRule"/>
</dbReference>
<dbReference type="GO" id="GO:0016992">
    <property type="term" value="F:lipoate synthase activity"/>
    <property type="evidence" value="ECO:0007669"/>
    <property type="project" value="UniProtKB-UniRule"/>
</dbReference>
<dbReference type="GO" id="GO:0046872">
    <property type="term" value="F:metal ion binding"/>
    <property type="evidence" value="ECO:0007669"/>
    <property type="project" value="UniProtKB-KW"/>
</dbReference>
<dbReference type="CDD" id="cd01335">
    <property type="entry name" value="Radical_SAM"/>
    <property type="match status" value="1"/>
</dbReference>
<dbReference type="Gene3D" id="3.20.20.70">
    <property type="entry name" value="Aldolase class I"/>
    <property type="match status" value="1"/>
</dbReference>
<dbReference type="HAMAP" id="MF_00206">
    <property type="entry name" value="Lipoyl_synth"/>
    <property type="match status" value="1"/>
</dbReference>
<dbReference type="InterPro" id="IPR013785">
    <property type="entry name" value="Aldolase_TIM"/>
</dbReference>
<dbReference type="InterPro" id="IPR006638">
    <property type="entry name" value="Elp3/MiaA/NifB-like_rSAM"/>
</dbReference>
<dbReference type="InterPro" id="IPR031691">
    <property type="entry name" value="LIAS_N"/>
</dbReference>
<dbReference type="InterPro" id="IPR003698">
    <property type="entry name" value="Lipoyl_synth"/>
</dbReference>
<dbReference type="InterPro" id="IPR007197">
    <property type="entry name" value="rSAM"/>
</dbReference>
<dbReference type="NCBIfam" id="TIGR00510">
    <property type="entry name" value="lipA"/>
    <property type="match status" value="1"/>
</dbReference>
<dbReference type="NCBIfam" id="NF004019">
    <property type="entry name" value="PRK05481.1"/>
    <property type="match status" value="1"/>
</dbReference>
<dbReference type="NCBIfam" id="NF009544">
    <property type="entry name" value="PRK12928.1"/>
    <property type="match status" value="1"/>
</dbReference>
<dbReference type="PANTHER" id="PTHR10949">
    <property type="entry name" value="LIPOYL SYNTHASE"/>
    <property type="match status" value="1"/>
</dbReference>
<dbReference type="PANTHER" id="PTHR10949:SF0">
    <property type="entry name" value="LIPOYL SYNTHASE, MITOCHONDRIAL"/>
    <property type="match status" value="1"/>
</dbReference>
<dbReference type="Pfam" id="PF16881">
    <property type="entry name" value="LIAS_N"/>
    <property type="match status" value="1"/>
</dbReference>
<dbReference type="Pfam" id="PF04055">
    <property type="entry name" value="Radical_SAM"/>
    <property type="match status" value="1"/>
</dbReference>
<dbReference type="PIRSF" id="PIRSF005963">
    <property type="entry name" value="Lipoyl_synth"/>
    <property type="match status" value="1"/>
</dbReference>
<dbReference type="SFLD" id="SFLDF00271">
    <property type="entry name" value="lipoyl_synthase"/>
    <property type="match status" value="1"/>
</dbReference>
<dbReference type="SFLD" id="SFLDG01058">
    <property type="entry name" value="lipoyl_synthase_like"/>
    <property type="match status" value="1"/>
</dbReference>
<dbReference type="SMART" id="SM00729">
    <property type="entry name" value="Elp3"/>
    <property type="match status" value="1"/>
</dbReference>
<dbReference type="SUPFAM" id="SSF102114">
    <property type="entry name" value="Radical SAM enzymes"/>
    <property type="match status" value="1"/>
</dbReference>
<dbReference type="PROSITE" id="PS51918">
    <property type="entry name" value="RADICAL_SAM"/>
    <property type="match status" value="1"/>
</dbReference>
<accession>A6WD63</accession>
<gene>
    <name evidence="1" type="primary">lipA</name>
    <name type="ordered locus">Krad_3288</name>
</gene>
<organism>
    <name type="scientific">Kineococcus radiotolerans (strain ATCC BAA-149 / DSM 14245 / SRS30216)</name>
    <dbReference type="NCBI Taxonomy" id="266940"/>
    <lineage>
        <taxon>Bacteria</taxon>
        <taxon>Bacillati</taxon>
        <taxon>Actinomycetota</taxon>
        <taxon>Actinomycetes</taxon>
        <taxon>Kineosporiales</taxon>
        <taxon>Kineosporiaceae</taxon>
        <taxon>Kineococcus</taxon>
    </lineage>
</organism>
<proteinExistence type="inferred from homology"/>
<name>LIPA_KINRD</name>
<comment type="function">
    <text evidence="1">Catalyzes the radical-mediated insertion of two sulfur atoms into the C-6 and C-8 positions of the octanoyl moiety bound to the lipoyl domains of lipoate-dependent enzymes, thereby converting the octanoylated domains into lipoylated derivatives.</text>
</comment>
<comment type="catalytic activity">
    <reaction evidence="1">
        <text>[[Fe-S] cluster scaffold protein carrying a second [4Fe-4S](2+) cluster] + N(6)-octanoyl-L-lysyl-[protein] + 2 oxidized [2Fe-2S]-[ferredoxin] + 2 S-adenosyl-L-methionine + 4 H(+) = [[Fe-S] cluster scaffold protein] + N(6)-[(R)-dihydrolipoyl]-L-lysyl-[protein] + 4 Fe(3+) + 2 hydrogen sulfide + 2 5'-deoxyadenosine + 2 L-methionine + 2 reduced [2Fe-2S]-[ferredoxin]</text>
        <dbReference type="Rhea" id="RHEA:16585"/>
        <dbReference type="Rhea" id="RHEA-COMP:9928"/>
        <dbReference type="Rhea" id="RHEA-COMP:10000"/>
        <dbReference type="Rhea" id="RHEA-COMP:10001"/>
        <dbReference type="Rhea" id="RHEA-COMP:10475"/>
        <dbReference type="Rhea" id="RHEA-COMP:14568"/>
        <dbReference type="Rhea" id="RHEA-COMP:14569"/>
        <dbReference type="ChEBI" id="CHEBI:15378"/>
        <dbReference type="ChEBI" id="CHEBI:17319"/>
        <dbReference type="ChEBI" id="CHEBI:29034"/>
        <dbReference type="ChEBI" id="CHEBI:29919"/>
        <dbReference type="ChEBI" id="CHEBI:33722"/>
        <dbReference type="ChEBI" id="CHEBI:33737"/>
        <dbReference type="ChEBI" id="CHEBI:33738"/>
        <dbReference type="ChEBI" id="CHEBI:57844"/>
        <dbReference type="ChEBI" id="CHEBI:59789"/>
        <dbReference type="ChEBI" id="CHEBI:78809"/>
        <dbReference type="ChEBI" id="CHEBI:83100"/>
        <dbReference type="EC" id="2.8.1.8"/>
    </reaction>
</comment>
<comment type="cofactor">
    <cofactor evidence="1">
        <name>[4Fe-4S] cluster</name>
        <dbReference type="ChEBI" id="CHEBI:49883"/>
    </cofactor>
    <text evidence="1">Binds 2 [4Fe-4S] clusters per subunit. One cluster is coordinated with 3 cysteines and an exchangeable S-adenosyl-L-methionine.</text>
</comment>
<comment type="pathway">
    <text evidence="1">Protein modification; protein lipoylation via endogenous pathway; protein N(6)-(lipoyl)lysine from octanoyl-[acyl-carrier-protein]: step 2/2.</text>
</comment>
<comment type="subcellular location">
    <subcellularLocation>
        <location evidence="1">Cytoplasm</location>
    </subcellularLocation>
</comment>
<comment type="similarity">
    <text evidence="1">Belongs to the radical SAM superfamily. Lipoyl synthase family.</text>
</comment>
<keyword id="KW-0004">4Fe-4S</keyword>
<keyword id="KW-0963">Cytoplasm</keyword>
<keyword id="KW-0408">Iron</keyword>
<keyword id="KW-0411">Iron-sulfur</keyword>
<keyword id="KW-0479">Metal-binding</keyword>
<keyword id="KW-1185">Reference proteome</keyword>
<keyword id="KW-0949">S-adenosyl-L-methionine</keyword>
<keyword id="KW-0808">Transferase</keyword>
<evidence type="ECO:0000255" key="1">
    <source>
        <dbReference type="HAMAP-Rule" id="MF_00206"/>
    </source>
</evidence>
<evidence type="ECO:0000255" key="2">
    <source>
        <dbReference type="PROSITE-ProRule" id="PRU01266"/>
    </source>
</evidence>
<feature type="chain" id="PRO_1000077960" description="Lipoyl synthase">
    <location>
        <begin position="1"/>
        <end position="333"/>
    </location>
</feature>
<feature type="domain" description="Radical SAM core" evidence="2">
    <location>
        <begin position="67"/>
        <end position="281"/>
    </location>
</feature>
<feature type="binding site" evidence="1">
    <location>
        <position position="55"/>
    </location>
    <ligand>
        <name>[4Fe-4S] cluster</name>
        <dbReference type="ChEBI" id="CHEBI:49883"/>
        <label>1</label>
    </ligand>
</feature>
<feature type="binding site" evidence="1">
    <location>
        <position position="60"/>
    </location>
    <ligand>
        <name>[4Fe-4S] cluster</name>
        <dbReference type="ChEBI" id="CHEBI:49883"/>
        <label>1</label>
    </ligand>
</feature>
<feature type="binding site" evidence="1">
    <location>
        <position position="66"/>
    </location>
    <ligand>
        <name>[4Fe-4S] cluster</name>
        <dbReference type="ChEBI" id="CHEBI:49883"/>
        <label>1</label>
    </ligand>
</feature>
<feature type="binding site" evidence="1">
    <location>
        <position position="81"/>
    </location>
    <ligand>
        <name>[4Fe-4S] cluster</name>
        <dbReference type="ChEBI" id="CHEBI:49883"/>
        <label>2</label>
        <note>4Fe-4S-S-AdoMet</note>
    </ligand>
</feature>
<feature type="binding site" evidence="1">
    <location>
        <position position="85"/>
    </location>
    <ligand>
        <name>[4Fe-4S] cluster</name>
        <dbReference type="ChEBI" id="CHEBI:49883"/>
        <label>2</label>
        <note>4Fe-4S-S-AdoMet</note>
    </ligand>
</feature>
<feature type="binding site" evidence="1">
    <location>
        <position position="88"/>
    </location>
    <ligand>
        <name>[4Fe-4S] cluster</name>
        <dbReference type="ChEBI" id="CHEBI:49883"/>
        <label>2</label>
        <note>4Fe-4S-S-AdoMet</note>
    </ligand>
</feature>
<feature type="binding site" evidence="1">
    <location>
        <position position="292"/>
    </location>
    <ligand>
        <name>[4Fe-4S] cluster</name>
        <dbReference type="ChEBI" id="CHEBI:49883"/>
        <label>1</label>
    </ligand>
</feature>
<protein>
    <recommendedName>
        <fullName evidence="1">Lipoyl synthase</fullName>
        <ecNumber evidence="1">2.8.1.8</ecNumber>
    </recommendedName>
    <alternativeName>
        <fullName evidence="1">Lip-syn</fullName>
        <shortName evidence="1">LS</shortName>
    </alternativeName>
    <alternativeName>
        <fullName evidence="1">Lipoate synthase</fullName>
    </alternativeName>
    <alternativeName>
        <fullName evidence="1">Lipoic acid synthase</fullName>
    </alternativeName>
    <alternativeName>
        <fullName evidence="1">Sulfur insertion protein LipA</fullName>
    </alternativeName>
</protein>
<reference key="1">
    <citation type="journal article" date="2008" name="PLoS ONE">
        <title>Survival in nuclear waste, extreme resistance, and potential applications gleaned from the genome sequence of Kineococcus radiotolerans SRS30216.</title>
        <authorList>
            <person name="Bagwell C.E."/>
            <person name="Bhat S."/>
            <person name="Hawkins G.M."/>
            <person name="Smith B.W."/>
            <person name="Biswas T."/>
            <person name="Hoover T.R."/>
            <person name="Saunders E."/>
            <person name="Han C.S."/>
            <person name="Tsodikov O.V."/>
            <person name="Shimkets L.J."/>
        </authorList>
    </citation>
    <scope>NUCLEOTIDE SEQUENCE [LARGE SCALE GENOMIC DNA]</scope>
    <source>
        <strain>ATCC BAA-149 / DSM 14245 / SRS30216</strain>
    </source>
</reference>